<dbReference type="EC" id="1.14.11.-"/>
<dbReference type="EC" id="1.14.11.27"/>
<dbReference type="EMBL" id="AE014298">
    <property type="protein sequence ID" value="AAN09120.1"/>
    <property type="molecule type" value="Genomic_DNA"/>
</dbReference>
<dbReference type="EMBL" id="AY051917">
    <property type="protein sequence ID" value="AAK93341.1"/>
    <property type="molecule type" value="mRNA"/>
</dbReference>
<dbReference type="RefSeq" id="NP_572160.1">
    <property type="nucleotide sequence ID" value="NM_131932.4"/>
</dbReference>
<dbReference type="RefSeq" id="NP_726923.1">
    <property type="nucleotide sequence ID" value="NM_167007.3"/>
</dbReference>
<dbReference type="SMR" id="Q7K4H4"/>
<dbReference type="BioGRID" id="57891">
    <property type="interactions" value="16"/>
</dbReference>
<dbReference type="FunCoup" id="Q7K4H4">
    <property type="interactions" value="1917"/>
</dbReference>
<dbReference type="IntAct" id="Q7K4H4">
    <property type="interactions" value="20"/>
</dbReference>
<dbReference type="STRING" id="7227.FBpp0070616"/>
<dbReference type="iPTMnet" id="Q7K4H4"/>
<dbReference type="PaxDb" id="7227-FBpp0070616"/>
<dbReference type="DNASU" id="31374"/>
<dbReference type="EnsemblMetazoa" id="FBtr0070648">
    <property type="protein sequence ID" value="FBpp0070616"/>
    <property type="gene ID" value="FBgn0266570"/>
</dbReference>
<dbReference type="EnsemblMetazoa" id="FBtr0340200">
    <property type="protein sequence ID" value="FBpp0309175"/>
    <property type="gene ID" value="FBgn0266570"/>
</dbReference>
<dbReference type="GeneID" id="31374"/>
<dbReference type="KEGG" id="dme:Dmel_CG2982"/>
<dbReference type="UCSC" id="CG2982-RA">
    <property type="organism name" value="d. melanogaster"/>
</dbReference>
<dbReference type="AGR" id="FB:FBgn0266570"/>
<dbReference type="CTD" id="31374"/>
<dbReference type="FlyBase" id="FBgn0266570">
    <property type="gene designation" value="NO66"/>
</dbReference>
<dbReference type="VEuPathDB" id="VectorBase:FBgn0266570"/>
<dbReference type="eggNOG" id="KOG3706">
    <property type="taxonomic scope" value="Eukaryota"/>
</dbReference>
<dbReference type="GeneTree" id="ENSGT00390000000083"/>
<dbReference type="HOGENOM" id="CLU_013645_2_1_1"/>
<dbReference type="InParanoid" id="Q7K4H4"/>
<dbReference type="OMA" id="YLEYMGV"/>
<dbReference type="OrthoDB" id="425950at2759"/>
<dbReference type="PhylomeDB" id="Q7K4H4"/>
<dbReference type="Reactome" id="R-DME-9629569">
    <property type="pathway name" value="Protein hydroxylation"/>
</dbReference>
<dbReference type="SignaLink" id="Q7K4H4"/>
<dbReference type="BioGRID-ORCS" id="31374">
    <property type="hits" value="0 hits in 3 CRISPR screens"/>
</dbReference>
<dbReference type="GenomeRNAi" id="31374"/>
<dbReference type="PRO" id="PR:Q7K4H4"/>
<dbReference type="Proteomes" id="UP000000803">
    <property type="component" value="Chromosome X"/>
</dbReference>
<dbReference type="Bgee" id="FBgn0266570">
    <property type="expression patterns" value="Expressed in egg chamber and 55 other cell types or tissues"/>
</dbReference>
<dbReference type="ExpressionAtlas" id="Q7K4H4">
    <property type="expression patterns" value="baseline and differential"/>
</dbReference>
<dbReference type="GO" id="GO:0005730">
    <property type="term" value="C:nucleolus"/>
    <property type="evidence" value="ECO:0000314"/>
    <property type="project" value="FlyBase"/>
</dbReference>
<dbReference type="GO" id="GO:0005634">
    <property type="term" value="C:nucleus"/>
    <property type="evidence" value="ECO:0000250"/>
    <property type="project" value="UniProtKB"/>
</dbReference>
<dbReference type="GO" id="GO:0016706">
    <property type="term" value="F:2-oxoglutarate-dependent dioxygenase activity"/>
    <property type="evidence" value="ECO:0000250"/>
    <property type="project" value="UniProtKB"/>
</dbReference>
<dbReference type="GO" id="GO:0051864">
    <property type="term" value="F:histone H3K36 demethylase activity"/>
    <property type="evidence" value="ECO:0000250"/>
    <property type="project" value="UniProtKB"/>
</dbReference>
<dbReference type="GO" id="GO:0140680">
    <property type="term" value="F:histone H3K36me/H3K36me2 demethylase activity"/>
    <property type="evidence" value="ECO:0007669"/>
    <property type="project" value="UniProtKB-EC"/>
</dbReference>
<dbReference type="GO" id="GO:0032453">
    <property type="term" value="F:histone H3K4 demethylase activity"/>
    <property type="evidence" value="ECO:0000318"/>
    <property type="project" value="GO_Central"/>
</dbReference>
<dbReference type="GO" id="GO:0034647">
    <property type="term" value="F:histone H3K4me/H3K4me2/H3K4me3 demethylase activity"/>
    <property type="evidence" value="ECO:0000250"/>
    <property type="project" value="UniProtKB"/>
</dbReference>
<dbReference type="GO" id="GO:0005506">
    <property type="term" value="F:iron ion binding"/>
    <property type="evidence" value="ECO:0000250"/>
    <property type="project" value="UniProtKB"/>
</dbReference>
<dbReference type="GO" id="GO:0048149">
    <property type="term" value="P:behavioral response to ethanol"/>
    <property type="evidence" value="ECO:0000315"/>
    <property type="project" value="UniProtKB"/>
</dbReference>
<dbReference type="GO" id="GO:0048512">
    <property type="term" value="P:circadian behavior"/>
    <property type="evidence" value="ECO:0000315"/>
    <property type="project" value="UniProtKB"/>
</dbReference>
<dbReference type="GO" id="GO:0045892">
    <property type="term" value="P:negative regulation of DNA-templated transcription"/>
    <property type="evidence" value="ECO:0000250"/>
    <property type="project" value="UniProtKB"/>
</dbReference>
<dbReference type="FunFam" id="2.60.120.650:FF:000013">
    <property type="entry name" value="Ribosomal oxygenase 1"/>
    <property type="match status" value="1"/>
</dbReference>
<dbReference type="FunFam" id="1.10.10.1500:FF:000001">
    <property type="entry name" value="ribosomal oxygenase 1 isoform X1"/>
    <property type="match status" value="1"/>
</dbReference>
<dbReference type="FunFam" id="3.90.930.40:FF:000001">
    <property type="entry name" value="ribosomal oxygenase 1 isoform X1"/>
    <property type="match status" value="1"/>
</dbReference>
<dbReference type="Gene3D" id="3.90.930.40">
    <property type="match status" value="1"/>
</dbReference>
<dbReference type="Gene3D" id="2.60.120.650">
    <property type="entry name" value="Cupin"/>
    <property type="match status" value="1"/>
</dbReference>
<dbReference type="Gene3D" id="1.10.10.1500">
    <property type="entry name" value="JmjC domain-containing ribosomal oxygenase (ROX), dimer domain"/>
    <property type="match status" value="1"/>
</dbReference>
<dbReference type="InterPro" id="IPR003347">
    <property type="entry name" value="JmjC_dom"/>
</dbReference>
<dbReference type="InterPro" id="IPR039994">
    <property type="entry name" value="NO66-like"/>
</dbReference>
<dbReference type="InterPro" id="IPR049043">
    <property type="entry name" value="RIOX1/NO66-like_C_WH"/>
</dbReference>
<dbReference type="PANTHER" id="PTHR13096">
    <property type="entry name" value="MINA53 MYC INDUCED NUCLEAR ANTIGEN"/>
    <property type="match status" value="1"/>
</dbReference>
<dbReference type="PANTHER" id="PTHR13096:SF8">
    <property type="entry name" value="RIBOSOMAL OXYGENASE 1"/>
    <property type="match status" value="1"/>
</dbReference>
<dbReference type="Pfam" id="PF08007">
    <property type="entry name" value="JmjC_2"/>
    <property type="match status" value="1"/>
</dbReference>
<dbReference type="Pfam" id="PF21233">
    <property type="entry name" value="RIOX1_C_WH"/>
    <property type="match status" value="1"/>
</dbReference>
<dbReference type="SUPFAM" id="SSF51197">
    <property type="entry name" value="Clavaminate synthase-like"/>
    <property type="match status" value="1"/>
</dbReference>
<dbReference type="PROSITE" id="PS51184">
    <property type="entry name" value="JMJC"/>
    <property type="match status" value="1"/>
</dbReference>
<comment type="function">
    <text evidence="1">Oxygenase that can act as both a histone lysine demethylase and a ribosomal histidine hydroxylase. Specifically demethylates 'Lys-4' (H3K4me) and 'Lys-36' (H3K36me) of histone H3, thereby playing a central role in histone code (By similarity).</text>
</comment>
<comment type="catalytic activity">
    <reaction>
        <text>N(6),N(6)-dimethyl-L-lysyl(36)-[histone H3] + 2 2-oxoglutarate + 2 O2 = L-lysyl(36)-[histone H3] + 2 formaldehyde + 2 succinate + 2 CO2</text>
        <dbReference type="Rhea" id="RHEA:42032"/>
        <dbReference type="Rhea" id="RHEA-COMP:9785"/>
        <dbReference type="Rhea" id="RHEA-COMP:9787"/>
        <dbReference type="ChEBI" id="CHEBI:15379"/>
        <dbReference type="ChEBI" id="CHEBI:16526"/>
        <dbReference type="ChEBI" id="CHEBI:16810"/>
        <dbReference type="ChEBI" id="CHEBI:16842"/>
        <dbReference type="ChEBI" id="CHEBI:29969"/>
        <dbReference type="ChEBI" id="CHEBI:30031"/>
        <dbReference type="ChEBI" id="CHEBI:61976"/>
        <dbReference type="EC" id="1.14.11.27"/>
    </reaction>
</comment>
<comment type="cofactor">
    <cofactor evidence="1">
        <name>Fe(2+)</name>
        <dbReference type="ChEBI" id="CHEBI:29033"/>
    </cofactor>
    <text evidence="1">Binds 1 Fe(2+) ion per subunit.</text>
</comment>
<comment type="subcellular location">
    <subcellularLocation>
        <location evidence="1">Nucleus</location>
    </subcellularLocation>
</comment>
<comment type="similarity">
    <text evidence="6">Belongs to the ROX family. NO66 subfamily.</text>
</comment>
<reference key="1">
    <citation type="journal article" date="2000" name="Science">
        <title>The genome sequence of Drosophila melanogaster.</title>
        <authorList>
            <person name="Adams M.D."/>
            <person name="Celniker S.E."/>
            <person name="Holt R.A."/>
            <person name="Evans C.A."/>
            <person name="Gocayne J.D."/>
            <person name="Amanatides P.G."/>
            <person name="Scherer S.E."/>
            <person name="Li P.W."/>
            <person name="Hoskins R.A."/>
            <person name="Galle R.F."/>
            <person name="George R.A."/>
            <person name="Lewis S.E."/>
            <person name="Richards S."/>
            <person name="Ashburner M."/>
            <person name="Henderson S.N."/>
            <person name="Sutton G.G."/>
            <person name="Wortman J.R."/>
            <person name="Yandell M.D."/>
            <person name="Zhang Q."/>
            <person name="Chen L.X."/>
            <person name="Brandon R.C."/>
            <person name="Rogers Y.-H.C."/>
            <person name="Blazej R.G."/>
            <person name="Champe M."/>
            <person name="Pfeiffer B.D."/>
            <person name="Wan K.H."/>
            <person name="Doyle C."/>
            <person name="Baxter E.G."/>
            <person name="Helt G."/>
            <person name="Nelson C.R."/>
            <person name="Miklos G.L.G."/>
            <person name="Abril J.F."/>
            <person name="Agbayani A."/>
            <person name="An H.-J."/>
            <person name="Andrews-Pfannkoch C."/>
            <person name="Baldwin D."/>
            <person name="Ballew R.M."/>
            <person name="Basu A."/>
            <person name="Baxendale J."/>
            <person name="Bayraktaroglu L."/>
            <person name="Beasley E.M."/>
            <person name="Beeson K.Y."/>
            <person name="Benos P.V."/>
            <person name="Berman B.P."/>
            <person name="Bhandari D."/>
            <person name="Bolshakov S."/>
            <person name="Borkova D."/>
            <person name="Botchan M.R."/>
            <person name="Bouck J."/>
            <person name="Brokstein P."/>
            <person name="Brottier P."/>
            <person name="Burtis K.C."/>
            <person name="Busam D.A."/>
            <person name="Butler H."/>
            <person name="Cadieu E."/>
            <person name="Center A."/>
            <person name="Chandra I."/>
            <person name="Cherry J.M."/>
            <person name="Cawley S."/>
            <person name="Dahlke C."/>
            <person name="Davenport L.B."/>
            <person name="Davies P."/>
            <person name="de Pablos B."/>
            <person name="Delcher A."/>
            <person name="Deng Z."/>
            <person name="Mays A.D."/>
            <person name="Dew I."/>
            <person name="Dietz S.M."/>
            <person name="Dodson K."/>
            <person name="Doup L.E."/>
            <person name="Downes M."/>
            <person name="Dugan-Rocha S."/>
            <person name="Dunkov B.C."/>
            <person name="Dunn P."/>
            <person name="Durbin K.J."/>
            <person name="Evangelista C.C."/>
            <person name="Ferraz C."/>
            <person name="Ferriera S."/>
            <person name="Fleischmann W."/>
            <person name="Fosler C."/>
            <person name="Gabrielian A.E."/>
            <person name="Garg N.S."/>
            <person name="Gelbart W.M."/>
            <person name="Glasser K."/>
            <person name="Glodek A."/>
            <person name="Gong F."/>
            <person name="Gorrell J.H."/>
            <person name="Gu Z."/>
            <person name="Guan P."/>
            <person name="Harris M."/>
            <person name="Harris N.L."/>
            <person name="Harvey D.A."/>
            <person name="Heiman T.J."/>
            <person name="Hernandez J.R."/>
            <person name="Houck J."/>
            <person name="Hostin D."/>
            <person name="Houston K.A."/>
            <person name="Howland T.J."/>
            <person name="Wei M.-H."/>
            <person name="Ibegwam C."/>
            <person name="Jalali M."/>
            <person name="Kalush F."/>
            <person name="Karpen G.H."/>
            <person name="Ke Z."/>
            <person name="Kennison J.A."/>
            <person name="Ketchum K.A."/>
            <person name="Kimmel B.E."/>
            <person name="Kodira C.D."/>
            <person name="Kraft C.L."/>
            <person name="Kravitz S."/>
            <person name="Kulp D."/>
            <person name="Lai Z."/>
            <person name="Lasko P."/>
            <person name="Lei Y."/>
            <person name="Levitsky A.A."/>
            <person name="Li J.H."/>
            <person name="Li Z."/>
            <person name="Liang Y."/>
            <person name="Lin X."/>
            <person name="Liu X."/>
            <person name="Mattei B."/>
            <person name="McIntosh T.C."/>
            <person name="McLeod M.P."/>
            <person name="McPherson D."/>
            <person name="Merkulov G."/>
            <person name="Milshina N.V."/>
            <person name="Mobarry C."/>
            <person name="Morris J."/>
            <person name="Moshrefi A."/>
            <person name="Mount S.M."/>
            <person name="Moy M."/>
            <person name="Murphy B."/>
            <person name="Murphy L."/>
            <person name="Muzny D.M."/>
            <person name="Nelson D.L."/>
            <person name="Nelson D.R."/>
            <person name="Nelson K.A."/>
            <person name="Nixon K."/>
            <person name="Nusskern D.R."/>
            <person name="Pacleb J.M."/>
            <person name="Palazzolo M."/>
            <person name="Pittman G.S."/>
            <person name="Pan S."/>
            <person name="Pollard J."/>
            <person name="Puri V."/>
            <person name="Reese M.G."/>
            <person name="Reinert K."/>
            <person name="Remington K."/>
            <person name="Saunders R.D.C."/>
            <person name="Scheeler F."/>
            <person name="Shen H."/>
            <person name="Shue B.C."/>
            <person name="Siden-Kiamos I."/>
            <person name="Simpson M."/>
            <person name="Skupski M.P."/>
            <person name="Smith T.J."/>
            <person name="Spier E."/>
            <person name="Spradling A.C."/>
            <person name="Stapleton M."/>
            <person name="Strong R."/>
            <person name="Sun E."/>
            <person name="Svirskas R."/>
            <person name="Tector C."/>
            <person name="Turner R."/>
            <person name="Venter E."/>
            <person name="Wang A.H."/>
            <person name="Wang X."/>
            <person name="Wang Z.-Y."/>
            <person name="Wassarman D.A."/>
            <person name="Weinstock G.M."/>
            <person name="Weissenbach J."/>
            <person name="Williams S.M."/>
            <person name="Woodage T."/>
            <person name="Worley K.C."/>
            <person name="Wu D."/>
            <person name="Yang S."/>
            <person name="Yao Q.A."/>
            <person name="Ye J."/>
            <person name="Yeh R.-F."/>
            <person name="Zaveri J.S."/>
            <person name="Zhan M."/>
            <person name="Zhang G."/>
            <person name="Zhao Q."/>
            <person name="Zheng L."/>
            <person name="Zheng X.H."/>
            <person name="Zhong F.N."/>
            <person name="Zhong W."/>
            <person name="Zhou X."/>
            <person name="Zhu S.C."/>
            <person name="Zhu X."/>
            <person name="Smith H.O."/>
            <person name="Gibbs R.A."/>
            <person name="Myers E.W."/>
            <person name="Rubin G.M."/>
            <person name="Venter J.C."/>
        </authorList>
    </citation>
    <scope>NUCLEOTIDE SEQUENCE [LARGE SCALE GENOMIC DNA]</scope>
    <source>
        <strain>Berkeley</strain>
    </source>
</reference>
<reference key="2">
    <citation type="journal article" date="2002" name="Genome Biol.">
        <title>Annotation of the Drosophila melanogaster euchromatic genome: a systematic review.</title>
        <authorList>
            <person name="Misra S."/>
            <person name="Crosby M.A."/>
            <person name="Mungall C.J."/>
            <person name="Matthews B.B."/>
            <person name="Campbell K.S."/>
            <person name="Hradecky P."/>
            <person name="Huang Y."/>
            <person name="Kaminker J.S."/>
            <person name="Millburn G.H."/>
            <person name="Prochnik S.E."/>
            <person name="Smith C.D."/>
            <person name="Tupy J.L."/>
            <person name="Whitfield E.J."/>
            <person name="Bayraktaroglu L."/>
            <person name="Berman B.P."/>
            <person name="Bettencourt B.R."/>
            <person name="Celniker S.E."/>
            <person name="de Grey A.D.N.J."/>
            <person name="Drysdale R.A."/>
            <person name="Harris N.L."/>
            <person name="Richter J."/>
            <person name="Russo S."/>
            <person name="Schroeder A.J."/>
            <person name="Shu S.Q."/>
            <person name="Stapleton M."/>
            <person name="Yamada C."/>
            <person name="Ashburner M."/>
            <person name="Gelbart W.M."/>
            <person name="Rubin G.M."/>
            <person name="Lewis S.E."/>
        </authorList>
    </citation>
    <scope>GENOME REANNOTATION</scope>
    <source>
        <strain>Berkeley</strain>
    </source>
</reference>
<reference key="3">
    <citation type="journal article" date="2002" name="Genome Biol.">
        <title>A Drosophila full-length cDNA resource.</title>
        <authorList>
            <person name="Stapleton M."/>
            <person name="Carlson J.W."/>
            <person name="Brokstein P."/>
            <person name="Yu C."/>
            <person name="Champe M."/>
            <person name="George R.A."/>
            <person name="Guarin H."/>
            <person name="Kronmiller B."/>
            <person name="Pacleb J.M."/>
            <person name="Park S."/>
            <person name="Wan K.H."/>
            <person name="Rubin G.M."/>
            <person name="Celniker S.E."/>
        </authorList>
    </citation>
    <scope>NUCLEOTIDE SEQUENCE [LARGE SCALE MRNA]</scope>
    <source>
        <strain>Berkeley</strain>
        <tissue>Embryo</tissue>
    </source>
</reference>
<reference key="4">
    <citation type="journal article" date="2007" name="Mol. Biosyst.">
        <title>An integrated chemical, mass spectrometric and computational strategy for (quantitative) phosphoproteomics: application to Drosophila melanogaster Kc167 cells.</title>
        <authorList>
            <person name="Bodenmiller B."/>
            <person name="Mueller L.N."/>
            <person name="Pedrioli P.G.A."/>
            <person name="Pflieger D."/>
            <person name="Juenger M.A."/>
            <person name="Eng J.K."/>
            <person name="Aebersold R."/>
            <person name="Tao W.A."/>
        </authorList>
    </citation>
    <scope>PHOSPHORYLATION [LARGE SCALE ANALYSIS] AT THR-137 AND SER-138</scope>
    <scope>IDENTIFICATION BY MASS SPECTROMETRY</scope>
</reference>
<reference key="5">
    <citation type="journal article" date="2008" name="J. Proteome Res.">
        <title>Phosphoproteome analysis of Drosophila melanogaster embryos.</title>
        <authorList>
            <person name="Zhai B."/>
            <person name="Villen J."/>
            <person name="Beausoleil S.A."/>
            <person name="Mintseris J."/>
            <person name="Gygi S.P."/>
        </authorList>
    </citation>
    <scope>PHOSPHORYLATION [LARGE SCALE ANALYSIS] AT SER-44; SER-131 AND SER-138</scope>
    <scope>IDENTIFICATION BY MASS SPECTROMETRY</scope>
    <source>
        <tissue>Embryo</tissue>
    </source>
</reference>
<feature type="chain" id="PRO_0000348221" description="Bifunctional lysine-specific demethylase and histidyl-hydroxylase NO66">
    <location>
        <begin position="1"/>
        <end position="653"/>
    </location>
</feature>
<feature type="domain" description="JmjC" evidence="2">
    <location>
        <begin position="300"/>
        <end position="450"/>
    </location>
</feature>
<feature type="region of interest" description="Disordered" evidence="3">
    <location>
        <begin position="1"/>
        <end position="50"/>
    </location>
</feature>
<feature type="region of interest" description="Disordered" evidence="3">
    <location>
        <begin position="65"/>
        <end position="137"/>
    </location>
</feature>
<feature type="region of interest" description="Disordered" evidence="3">
    <location>
        <begin position="184"/>
        <end position="208"/>
    </location>
</feature>
<feature type="compositionally biased region" description="Low complexity" evidence="3">
    <location>
        <begin position="1"/>
        <end position="12"/>
    </location>
</feature>
<feature type="compositionally biased region" description="Polar residues" evidence="3">
    <location>
        <begin position="13"/>
        <end position="26"/>
    </location>
</feature>
<feature type="compositionally biased region" description="Low complexity" evidence="3">
    <location>
        <begin position="72"/>
        <end position="86"/>
    </location>
</feature>
<feature type="compositionally biased region" description="Basic and acidic residues" evidence="3">
    <location>
        <begin position="194"/>
        <end position="208"/>
    </location>
</feature>
<feature type="binding site" evidence="2">
    <location>
        <position position="351"/>
    </location>
    <ligand>
        <name>Fe cation</name>
        <dbReference type="ChEBI" id="CHEBI:24875"/>
        <note>catalytic</note>
    </ligand>
</feature>
<feature type="binding site" evidence="2">
    <location>
        <position position="353"/>
    </location>
    <ligand>
        <name>Fe cation</name>
        <dbReference type="ChEBI" id="CHEBI:24875"/>
        <note>catalytic</note>
    </ligand>
</feature>
<feature type="binding site" evidence="2">
    <location>
        <position position="416"/>
    </location>
    <ligand>
        <name>Fe cation</name>
        <dbReference type="ChEBI" id="CHEBI:24875"/>
        <note>catalytic</note>
    </ligand>
</feature>
<feature type="modified residue" description="Phosphoserine" evidence="5">
    <location>
        <position position="44"/>
    </location>
</feature>
<feature type="modified residue" description="Phosphoserine" evidence="5">
    <location>
        <position position="131"/>
    </location>
</feature>
<feature type="modified residue" description="Phosphothreonine" evidence="4">
    <location>
        <position position="137"/>
    </location>
</feature>
<feature type="modified residue" description="Phosphoserine" evidence="4 5">
    <location>
        <position position="138"/>
    </location>
</feature>
<proteinExistence type="evidence at protein level"/>
<sequence>MKKATTSAAAKSQGNSKMQKNANNGTAKDKKKPNLDKESNDSNSVSDMLAVTKDQEVHAFFSKLFDDDAGPSTSKKTQSGSAAAAKTADRKRRLQAEADANNNDTGKAGKLTKESEATQGARATKRKQARSLGLERTSPIQVNGAALACPLVRKSLPPGEANSCPQPPKKDPAAVNSLVKIIKAEPTEEGNNNNDEKETETIETHKADSVEEGRRVLQWILFPVQTKVFFKDFWEHTACLVQRSNPKYFQSMISFKMLDEILIRHHLDFTVNVDVTTYKNGKRETLNPEGRALPPAVWGFYSDGCSIRLLNPSTYLIRLRQVCTVLQEFFHCKVGANLYLTPPNSQGFAPHYDDIEAFVIQVEGRKRWLLYEPPKKADQLARISSGNYDQEQLGKPIIDEVLSAGDVLYFPRGAVHQAITEEQQHSLHITLSVYQQQAYANLLETLMPMVLKKAVDRSVALRRGLPLHTFQVLGNAYKGNDCGSRKQLVENVQKLVTNYLMPSEDDIDEAVDQMAKKFQHEALPPIVLPSEEVRTVHGARSDADEQGNCVCDYKFNKKTSVRLLRANILRLVTESDGSVRIYHHVDNGLDYCKYEPYFMEILPEEAKAVELLISAYPFYLTIDQLPLESSARKIEVATALWEHGLLMTEKPFK</sequence>
<organism>
    <name type="scientific">Drosophila melanogaster</name>
    <name type="common">Fruit fly</name>
    <dbReference type="NCBI Taxonomy" id="7227"/>
    <lineage>
        <taxon>Eukaryota</taxon>
        <taxon>Metazoa</taxon>
        <taxon>Ecdysozoa</taxon>
        <taxon>Arthropoda</taxon>
        <taxon>Hexapoda</taxon>
        <taxon>Insecta</taxon>
        <taxon>Pterygota</taxon>
        <taxon>Neoptera</taxon>
        <taxon>Endopterygota</taxon>
        <taxon>Diptera</taxon>
        <taxon>Brachycera</taxon>
        <taxon>Muscomorpha</taxon>
        <taxon>Ephydroidea</taxon>
        <taxon>Drosophilidae</taxon>
        <taxon>Drosophila</taxon>
        <taxon>Sophophora</taxon>
    </lineage>
</organism>
<protein>
    <recommendedName>
        <fullName>Bifunctional lysine-specific demethylase and histidyl-hydroxylase NO66</fullName>
        <ecNumber>1.14.11.-</ecNumber>
        <ecNumber>1.14.11.27</ecNumber>
    </recommendedName>
    <alternativeName>
        <fullName>Histone lysine demethylase NO66</fullName>
    </alternativeName>
</protein>
<name>NO66_DROME</name>
<accession>Q7K4H4</accession>
<keyword id="KW-0156">Chromatin regulator</keyword>
<keyword id="KW-0223">Dioxygenase</keyword>
<keyword id="KW-0408">Iron</keyword>
<keyword id="KW-0479">Metal-binding</keyword>
<keyword id="KW-0539">Nucleus</keyword>
<keyword id="KW-0560">Oxidoreductase</keyword>
<keyword id="KW-0597">Phosphoprotein</keyword>
<keyword id="KW-1185">Reference proteome</keyword>
<keyword id="KW-0678">Repressor</keyword>
<keyword id="KW-0804">Transcription</keyword>
<keyword id="KW-0805">Transcription regulation</keyword>
<evidence type="ECO:0000250" key="1"/>
<evidence type="ECO:0000255" key="2">
    <source>
        <dbReference type="PROSITE-ProRule" id="PRU00538"/>
    </source>
</evidence>
<evidence type="ECO:0000256" key="3">
    <source>
        <dbReference type="SAM" id="MobiDB-lite"/>
    </source>
</evidence>
<evidence type="ECO:0000269" key="4">
    <source>
    </source>
</evidence>
<evidence type="ECO:0000269" key="5">
    <source>
    </source>
</evidence>
<evidence type="ECO:0000305" key="6"/>
<evidence type="ECO:0000312" key="7">
    <source>
        <dbReference type="FlyBase" id="FBgn0266570"/>
    </source>
</evidence>
<gene>
    <name evidence="7" type="primary">NO66</name>
    <name evidence="7" type="ORF">CG2982</name>
</gene>